<name>Y1047_LACLS</name>
<accession>Q02ZN8</accession>
<organism>
    <name type="scientific">Lactococcus lactis subsp. cremoris (strain SK11)</name>
    <dbReference type="NCBI Taxonomy" id="272622"/>
    <lineage>
        <taxon>Bacteria</taxon>
        <taxon>Bacillati</taxon>
        <taxon>Bacillota</taxon>
        <taxon>Bacilli</taxon>
        <taxon>Lactobacillales</taxon>
        <taxon>Streptococcaceae</taxon>
        <taxon>Lactococcus</taxon>
        <taxon>Lactococcus cremoris subsp. cremoris</taxon>
    </lineage>
</organism>
<proteinExistence type="inferred from homology"/>
<dbReference type="EMBL" id="CP000425">
    <property type="protein sequence ID" value="ABJ72584.1"/>
    <property type="molecule type" value="Genomic_DNA"/>
</dbReference>
<dbReference type="SMR" id="Q02ZN8"/>
<dbReference type="KEGG" id="llc:LACR_1047"/>
<dbReference type="HOGENOM" id="CLU_059558_0_0_9"/>
<dbReference type="Proteomes" id="UP000000240">
    <property type="component" value="Chromosome"/>
</dbReference>
<dbReference type="GO" id="GO:0005524">
    <property type="term" value="F:ATP binding"/>
    <property type="evidence" value="ECO:0007669"/>
    <property type="project" value="UniProtKB-UniRule"/>
</dbReference>
<dbReference type="GO" id="GO:0005525">
    <property type="term" value="F:GTP binding"/>
    <property type="evidence" value="ECO:0007669"/>
    <property type="project" value="UniProtKB-UniRule"/>
</dbReference>
<dbReference type="Gene3D" id="3.40.50.300">
    <property type="entry name" value="P-loop containing nucleotide triphosphate hydrolases"/>
    <property type="match status" value="1"/>
</dbReference>
<dbReference type="HAMAP" id="MF_00636">
    <property type="entry name" value="RapZ_like"/>
    <property type="match status" value="1"/>
</dbReference>
<dbReference type="InterPro" id="IPR027417">
    <property type="entry name" value="P-loop_NTPase"/>
</dbReference>
<dbReference type="InterPro" id="IPR005337">
    <property type="entry name" value="RapZ-like"/>
</dbReference>
<dbReference type="InterPro" id="IPR053930">
    <property type="entry name" value="RapZ-like_N"/>
</dbReference>
<dbReference type="InterPro" id="IPR053931">
    <property type="entry name" value="RapZ_C"/>
</dbReference>
<dbReference type="NCBIfam" id="NF003828">
    <property type="entry name" value="PRK05416.1"/>
    <property type="match status" value="1"/>
</dbReference>
<dbReference type="PANTHER" id="PTHR30448">
    <property type="entry name" value="RNASE ADAPTER PROTEIN RAPZ"/>
    <property type="match status" value="1"/>
</dbReference>
<dbReference type="PANTHER" id="PTHR30448:SF0">
    <property type="entry name" value="RNASE ADAPTER PROTEIN RAPZ"/>
    <property type="match status" value="1"/>
</dbReference>
<dbReference type="Pfam" id="PF22740">
    <property type="entry name" value="PapZ_C"/>
    <property type="match status" value="1"/>
</dbReference>
<dbReference type="Pfam" id="PF03668">
    <property type="entry name" value="RapZ-like_N"/>
    <property type="match status" value="1"/>
</dbReference>
<dbReference type="PIRSF" id="PIRSF005052">
    <property type="entry name" value="P-loopkin"/>
    <property type="match status" value="1"/>
</dbReference>
<dbReference type="SUPFAM" id="SSF52540">
    <property type="entry name" value="P-loop containing nucleoside triphosphate hydrolases"/>
    <property type="match status" value="1"/>
</dbReference>
<sequence>MDNKLNIVIITGMSGAGKTVAIQSFEDMGYFTVDNMPPNLIEKFVGLLNTPDNKIDKVALVVDMRSRAFFEDIQSIVTELTDNTSVNFKLLFLDANDTELVSRYKETRRSHPLAIDGRTLDGITKEREILADLKNLSEVVIDTSELTPRNLRARILQKFATSTESTFRIEVMSFGFKYGLPLDADLVFDVRFLPNPHYISELRDKNGTDQEVYDYVMEHPQSEEFYQNLMKMLVPILPAYKKEGKSVLTIAFGCTGGQHRSVAFAERVSAALREKWHLNVSHRDKDRRKETVNRS</sequence>
<evidence type="ECO:0000255" key="1">
    <source>
        <dbReference type="HAMAP-Rule" id="MF_00636"/>
    </source>
</evidence>
<gene>
    <name type="ordered locus">LACR_1047</name>
</gene>
<protein>
    <recommendedName>
        <fullName evidence="1">Nucleotide-binding protein LACR_1047</fullName>
    </recommendedName>
</protein>
<reference key="1">
    <citation type="journal article" date="2006" name="Proc. Natl. Acad. Sci. U.S.A.">
        <title>Comparative genomics of the lactic acid bacteria.</title>
        <authorList>
            <person name="Makarova K.S."/>
            <person name="Slesarev A."/>
            <person name="Wolf Y.I."/>
            <person name="Sorokin A."/>
            <person name="Mirkin B."/>
            <person name="Koonin E.V."/>
            <person name="Pavlov A."/>
            <person name="Pavlova N."/>
            <person name="Karamychev V."/>
            <person name="Polouchine N."/>
            <person name="Shakhova V."/>
            <person name="Grigoriev I."/>
            <person name="Lou Y."/>
            <person name="Rohksar D."/>
            <person name="Lucas S."/>
            <person name="Huang K."/>
            <person name="Goodstein D.M."/>
            <person name="Hawkins T."/>
            <person name="Plengvidhya V."/>
            <person name="Welker D."/>
            <person name="Hughes J."/>
            <person name="Goh Y."/>
            <person name="Benson A."/>
            <person name="Baldwin K."/>
            <person name="Lee J.-H."/>
            <person name="Diaz-Muniz I."/>
            <person name="Dosti B."/>
            <person name="Smeianov V."/>
            <person name="Wechter W."/>
            <person name="Barabote R."/>
            <person name="Lorca G."/>
            <person name="Altermann E."/>
            <person name="Barrangou R."/>
            <person name="Ganesan B."/>
            <person name="Xie Y."/>
            <person name="Rawsthorne H."/>
            <person name="Tamir D."/>
            <person name="Parker C."/>
            <person name="Breidt F."/>
            <person name="Broadbent J.R."/>
            <person name="Hutkins R."/>
            <person name="O'Sullivan D."/>
            <person name="Steele J."/>
            <person name="Unlu G."/>
            <person name="Saier M.H. Jr."/>
            <person name="Klaenhammer T."/>
            <person name="Richardson P."/>
            <person name="Kozyavkin S."/>
            <person name="Weimer B.C."/>
            <person name="Mills D.A."/>
        </authorList>
    </citation>
    <scope>NUCLEOTIDE SEQUENCE [LARGE SCALE GENOMIC DNA]</scope>
    <source>
        <strain>SK11</strain>
    </source>
</reference>
<comment type="function">
    <text evidence="1">Displays ATPase and GTPase activities.</text>
</comment>
<comment type="similarity">
    <text evidence="1">Belongs to the RapZ-like family.</text>
</comment>
<feature type="chain" id="PRO_1000056833" description="Nucleotide-binding protein LACR_1047">
    <location>
        <begin position="1"/>
        <end position="295"/>
    </location>
</feature>
<feature type="binding site" evidence="1">
    <location>
        <begin position="12"/>
        <end position="19"/>
    </location>
    <ligand>
        <name>ATP</name>
        <dbReference type="ChEBI" id="CHEBI:30616"/>
    </ligand>
</feature>
<feature type="binding site" evidence="1">
    <location>
        <begin position="63"/>
        <end position="66"/>
    </location>
    <ligand>
        <name>GTP</name>
        <dbReference type="ChEBI" id="CHEBI:37565"/>
    </ligand>
</feature>
<keyword id="KW-0067">ATP-binding</keyword>
<keyword id="KW-0342">GTP-binding</keyword>
<keyword id="KW-0547">Nucleotide-binding</keyword>